<dbReference type="EC" id="5.6.2.2" evidence="1"/>
<dbReference type="EMBL" id="CP000253">
    <property type="protein sequence ID" value="ABD29197.1"/>
    <property type="molecule type" value="Genomic_DNA"/>
</dbReference>
<dbReference type="RefSeq" id="WP_000819084.1">
    <property type="nucleotide sequence ID" value="NZ_LS483365.1"/>
</dbReference>
<dbReference type="RefSeq" id="YP_498614.1">
    <property type="nucleotide sequence ID" value="NC_007795.1"/>
</dbReference>
<dbReference type="PDB" id="9FZ6">
    <property type="method" value="X-ray"/>
    <property type="resolution" value="2.58 A"/>
    <property type="chains" value="A/C=9-491"/>
</dbReference>
<dbReference type="PDBsum" id="9FZ6"/>
<dbReference type="SMR" id="Q2G2Q0"/>
<dbReference type="STRING" id="93061.SAOUHSC_00006"/>
<dbReference type="PaxDb" id="1280-SAXN108_0007"/>
<dbReference type="GeneID" id="3919179"/>
<dbReference type="KEGG" id="sao:SAOUHSC_00006"/>
<dbReference type="PATRIC" id="fig|93061.5.peg.6"/>
<dbReference type="eggNOG" id="COG0188">
    <property type="taxonomic scope" value="Bacteria"/>
</dbReference>
<dbReference type="HOGENOM" id="CLU_002977_6_1_9"/>
<dbReference type="OrthoDB" id="9806486at2"/>
<dbReference type="PRO" id="PR:Q2G2Q0"/>
<dbReference type="Proteomes" id="UP000008816">
    <property type="component" value="Chromosome"/>
</dbReference>
<dbReference type="GO" id="GO:0005694">
    <property type="term" value="C:chromosome"/>
    <property type="evidence" value="ECO:0007669"/>
    <property type="project" value="InterPro"/>
</dbReference>
<dbReference type="GO" id="GO:0005737">
    <property type="term" value="C:cytoplasm"/>
    <property type="evidence" value="ECO:0000318"/>
    <property type="project" value="GO_Central"/>
</dbReference>
<dbReference type="GO" id="GO:0009330">
    <property type="term" value="C:DNA topoisomerase type II (double strand cut, ATP-hydrolyzing) complex"/>
    <property type="evidence" value="ECO:0000318"/>
    <property type="project" value="GO_Central"/>
</dbReference>
<dbReference type="GO" id="GO:0005524">
    <property type="term" value="F:ATP binding"/>
    <property type="evidence" value="ECO:0000318"/>
    <property type="project" value="GO_Central"/>
</dbReference>
<dbReference type="GO" id="GO:0003677">
    <property type="term" value="F:DNA binding"/>
    <property type="evidence" value="ECO:0000318"/>
    <property type="project" value="GO_Central"/>
</dbReference>
<dbReference type="GO" id="GO:0034335">
    <property type="term" value="F:DNA negative supercoiling activity"/>
    <property type="evidence" value="ECO:0007669"/>
    <property type="project" value="UniProtKB-ARBA"/>
</dbReference>
<dbReference type="GO" id="GO:0006265">
    <property type="term" value="P:DNA topological change"/>
    <property type="evidence" value="ECO:0000318"/>
    <property type="project" value="GO_Central"/>
</dbReference>
<dbReference type="GO" id="GO:0006261">
    <property type="term" value="P:DNA-templated DNA replication"/>
    <property type="evidence" value="ECO:0007669"/>
    <property type="project" value="UniProtKB-UniRule"/>
</dbReference>
<dbReference type="GO" id="GO:0046677">
    <property type="term" value="P:response to antibiotic"/>
    <property type="evidence" value="ECO:0007669"/>
    <property type="project" value="UniProtKB-KW"/>
</dbReference>
<dbReference type="CDD" id="cd00187">
    <property type="entry name" value="TOP4c"/>
    <property type="match status" value="1"/>
</dbReference>
<dbReference type="FunFam" id="1.10.268.10:FF:000001">
    <property type="entry name" value="DNA gyrase subunit A"/>
    <property type="match status" value="1"/>
</dbReference>
<dbReference type="FunFam" id="2.120.10.90:FF:000004">
    <property type="entry name" value="DNA gyrase subunit A"/>
    <property type="match status" value="1"/>
</dbReference>
<dbReference type="FunFam" id="3.30.1360.40:FF:000002">
    <property type="entry name" value="DNA gyrase subunit A"/>
    <property type="match status" value="1"/>
</dbReference>
<dbReference type="FunFam" id="3.90.199.10:FF:000001">
    <property type="entry name" value="DNA gyrase subunit A"/>
    <property type="match status" value="1"/>
</dbReference>
<dbReference type="Gene3D" id="3.30.1360.40">
    <property type="match status" value="1"/>
</dbReference>
<dbReference type="Gene3D" id="2.120.10.90">
    <property type="entry name" value="DNA gyrase/topoisomerase IV, subunit A, C-terminal"/>
    <property type="match status" value="1"/>
</dbReference>
<dbReference type="Gene3D" id="3.90.199.10">
    <property type="entry name" value="Topoisomerase II, domain 5"/>
    <property type="match status" value="1"/>
</dbReference>
<dbReference type="Gene3D" id="1.10.268.10">
    <property type="entry name" value="Topoisomerase, domain 3"/>
    <property type="match status" value="1"/>
</dbReference>
<dbReference type="HAMAP" id="MF_01897">
    <property type="entry name" value="GyrA"/>
    <property type="match status" value="1"/>
</dbReference>
<dbReference type="InterPro" id="IPR005743">
    <property type="entry name" value="GyrA"/>
</dbReference>
<dbReference type="InterPro" id="IPR006691">
    <property type="entry name" value="GyrA/parC_rep"/>
</dbReference>
<dbReference type="InterPro" id="IPR035516">
    <property type="entry name" value="Gyrase/topoIV_suA_C"/>
</dbReference>
<dbReference type="InterPro" id="IPR013760">
    <property type="entry name" value="Topo_IIA-like_dom_sf"/>
</dbReference>
<dbReference type="InterPro" id="IPR013758">
    <property type="entry name" value="Topo_IIA_A/C_ab"/>
</dbReference>
<dbReference type="InterPro" id="IPR013757">
    <property type="entry name" value="Topo_IIA_A_a_sf"/>
</dbReference>
<dbReference type="InterPro" id="IPR002205">
    <property type="entry name" value="Topo_IIA_dom_A"/>
</dbReference>
<dbReference type="InterPro" id="IPR050220">
    <property type="entry name" value="Type_II_DNA_Topoisomerases"/>
</dbReference>
<dbReference type="NCBIfam" id="TIGR01063">
    <property type="entry name" value="gyrA"/>
    <property type="match status" value="1"/>
</dbReference>
<dbReference type="NCBIfam" id="NF004043">
    <property type="entry name" value="PRK05560.1"/>
    <property type="match status" value="1"/>
</dbReference>
<dbReference type="NCBIfam" id="NF004044">
    <property type="entry name" value="PRK05561.1"/>
    <property type="match status" value="1"/>
</dbReference>
<dbReference type="PANTHER" id="PTHR43493:SF5">
    <property type="entry name" value="DNA GYRASE SUBUNIT A, CHLOROPLASTIC_MITOCHONDRIAL"/>
    <property type="match status" value="1"/>
</dbReference>
<dbReference type="PANTHER" id="PTHR43493">
    <property type="entry name" value="DNA GYRASE/TOPOISOMERASE SUBUNIT A"/>
    <property type="match status" value="1"/>
</dbReference>
<dbReference type="Pfam" id="PF03989">
    <property type="entry name" value="DNA_gyraseA_C"/>
    <property type="match status" value="6"/>
</dbReference>
<dbReference type="Pfam" id="PF00521">
    <property type="entry name" value="DNA_topoisoIV"/>
    <property type="match status" value="1"/>
</dbReference>
<dbReference type="SMART" id="SM00434">
    <property type="entry name" value="TOP4c"/>
    <property type="match status" value="1"/>
</dbReference>
<dbReference type="SUPFAM" id="SSF101904">
    <property type="entry name" value="GyrA/ParC C-terminal domain-like"/>
    <property type="match status" value="1"/>
</dbReference>
<dbReference type="SUPFAM" id="SSF56719">
    <property type="entry name" value="Type II DNA topoisomerase"/>
    <property type="match status" value="1"/>
</dbReference>
<dbReference type="PROSITE" id="PS52040">
    <property type="entry name" value="TOPO_IIA"/>
    <property type="match status" value="1"/>
</dbReference>
<organism>
    <name type="scientific">Staphylococcus aureus (strain NCTC 8325 / PS 47)</name>
    <dbReference type="NCBI Taxonomy" id="93061"/>
    <lineage>
        <taxon>Bacteria</taxon>
        <taxon>Bacillati</taxon>
        <taxon>Bacillota</taxon>
        <taxon>Bacilli</taxon>
        <taxon>Bacillales</taxon>
        <taxon>Staphylococcaceae</taxon>
        <taxon>Staphylococcus</taxon>
    </lineage>
</organism>
<feature type="chain" id="PRO_0000249333" description="DNA gyrase subunit A">
    <location>
        <begin position="1"/>
        <end position="887"/>
    </location>
</feature>
<feature type="domain" description="Topo IIA-type catalytic" evidence="2">
    <location>
        <begin position="35"/>
        <end position="501"/>
    </location>
</feature>
<feature type="region of interest" description="Disordered" evidence="3">
    <location>
        <begin position="811"/>
        <end position="865"/>
    </location>
</feature>
<feature type="short sequence motif" description="GyrA-box" evidence="1">
    <location>
        <begin position="528"/>
        <end position="534"/>
    </location>
</feature>
<feature type="compositionally biased region" description="Acidic residues" evidence="3">
    <location>
        <begin position="813"/>
        <end position="823"/>
    </location>
</feature>
<feature type="active site" description="O-(5'-phospho-DNA)-tyrosine intermediate" evidence="1">
    <location>
        <position position="123"/>
    </location>
</feature>
<feature type="mutagenesis site" description="Resistant to fluoroquinolones." evidence="4">
    <original>S</original>
    <variation>L</variation>
    <variation>A</variation>
    <location>
        <position position="84"/>
    </location>
</feature>
<feature type="mutagenesis site" description="Resistant to fluoroquinolones." evidence="4">
    <original>E</original>
    <variation>K</variation>
    <location>
        <position position="88"/>
    </location>
</feature>
<feature type="strand" evidence="5">
    <location>
        <begin position="11"/>
        <end position="13"/>
    </location>
</feature>
<feature type="helix" evidence="5">
    <location>
        <begin position="14"/>
        <end position="32"/>
    </location>
</feature>
<feature type="turn" evidence="5">
    <location>
        <begin position="38"/>
        <end position="40"/>
    </location>
</feature>
<feature type="helix" evidence="5">
    <location>
        <begin position="44"/>
        <end position="55"/>
    </location>
</feature>
<feature type="helix" evidence="5">
    <location>
        <begin position="67"/>
        <end position="77"/>
    </location>
</feature>
<feature type="helix" evidence="5">
    <location>
        <begin position="83"/>
        <end position="93"/>
    </location>
</feature>
<feature type="turn" evidence="5">
    <location>
        <begin position="96"/>
        <end position="98"/>
    </location>
</feature>
<feature type="strand" evidence="5">
    <location>
        <begin position="104"/>
        <end position="108"/>
    </location>
</feature>
<feature type="turn" evidence="5">
    <location>
        <begin position="121"/>
        <end position="123"/>
    </location>
</feature>
<feature type="strand" evidence="5">
    <location>
        <begin position="125"/>
        <end position="128"/>
    </location>
</feature>
<feature type="helix" evidence="5">
    <location>
        <begin position="130"/>
        <end position="136"/>
    </location>
</feature>
<feature type="turn" evidence="5">
    <location>
        <begin position="137"/>
        <end position="142"/>
    </location>
</feature>
<feature type="strand" evidence="5">
    <location>
        <begin position="146"/>
        <end position="148"/>
    </location>
</feature>
<feature type="strand" evidence="5">
    <location>
        <begin position="155"/>
        <end position="159"/>
    </location>
</feature>
<feature type="helix" evidence="5">
    <location>
        <begin position="166"/>
        <end position="170"/>
    </location>
</feature>
<feature type="strand" evidence="5">
    <location>
        <begin position="172"/>
        <end position="175"/>
    </location>
</feature>
<feature type="strand" evidence="5">
    <location>
        <begin position="180"/>
        <end position="183"/>
    </location>
</feature>
<feature type="helix" evidence="5">
    <location>
        <begin position="188"/>
        <end position="200"/>
    </location>
</feature>
<feature type="helix" evidence="5">
    <location>
        <begin position="206"/>
        <end position="209"/>
    </location>
</feature>
<feature type="turn" evidence="5">
    <location>
        <begin position="210"/>
        <end position="212"/>
    </location>
</feature>
<feature type="strand" evidence="5">
    <location>
        <begin position="223"/>
        <end position="225"/>
    </location>
</feature>
<feature type="helix" evidence="5">
    <location>
        <begin position="228"/>
        <end position="236"/>
    </location>
</feature>
<feature type="strand" evidence="5">
    <location>
        <begin position="237"/>
        <end position="244"/>
    </location>
</feature>
<feature type="strand" evidence="5">
    <location>
        <begin position="246"/>
        <end position="253"/>
    </location>
</feature>
<feature type="strand" evidence="5">
    <location>
        <begin position="256"/>
        <end position="263"/>
    </location>
</feature>
<feature type="helix" evidence="5">
    <location>
        <begin position="270"/>
        <end position="282"/>
    </location>
</feature>
<feature type="strand" evidence="5">
    <location>
        <begin position="288"/>
        <end position="294"/>
    </location>
</feature>
<feature type="turn" evidence="5">
    <location>
        <begin position="298"/>
        <end position="300"/>
    </location>
</feature>
<feature type="strand" evidence="5">
    <location>
        <begin position="304"/>
        <end position="308"/>
    </location>
</feature>
<feature type="strand" evidence="5">
    <location>
        <begin position="310"/>
        <end position="312"/>
    </location>
</feature>
<feature type="helix" evidence="5">
    <location>
        <begin position="314"/>
        <end position="324"/>
    </location>
</feature>
<feature type="strand" evidence="5">
    <location>
        <begin position="328"/>
        <end position="334"/>
    </location>
</feature>
<feature type="strand" evidence="5">
    <location>
        <begin position="336"/>
        <end position="345"/>
    </location>
</feature>
<feature type="helix" evidence="5">
    <location>
        <begin position="348"/>
        <end position="389"/>
    </location>
</feature>
<feature type="helix" evidence="5">
    <location>
        <begin position="391"/>
        <end position="400"/>
    </location>
</feature>
<feature type="helix" evidence="5">
    <location>
        <begin position="404"/>
        <end position="415"/>
    </location>
</feature>
<feature type="helix" evidence="5">
    <location>
        <begin position="419"/>
        <end position="426"/>
    </location>
</feature>
<feature type="helix" evidence="5">
    <location>
        <begin position="430"/>
        <end position="433"/>
    </location>
</feature>
<feature type="helix" evidence="5">
    <location>
        <begin position="437"/>
        <end position="460"/>
    </location>
</feature>
<feature type="helix" evidence="5">
    <location>
        <begin position="462"/>
        <end position="480"/>
    </location>
</feature>
<feature type="strand" evidence="5">
    <location>
        <begin position="486"/>
        <end position="489"/>
    </location>
</feature>
<proteinExistence type="evidence at protein level"/>
<name>GYRA_STAA8</name>
<evidence type="ECO:0000255" key="1">
    <source>
        <dbReference type="HAMAP-Rule" id="MF_01897"/>
    </source>
</evidence>
<evidence type="ECO:0000255" key="2">
    <source>
        <dbReference type="PROSITE-ProRule" id="PRU01384"/>
    </source>
</evidence>
<evidence type="ECO:0000256" key="3">
    <source>
        <dbReference type="SAM" id="MobiDB-lite"/>
    </source>
</evidence>
<evidence type="ECO:0000269" key="4">
    <source>
    </source>
</evidence>
<evidence type="ECO:0007829" key="5">
    <source>
        <dbReference type="PDB" id="9FZ6"/>
    </source>
</evidence>
<sequence length="887" mass="99351">MAELPQSRINERNITSEMRESFLDYAMSVIVARALPDVRDGLKPVHRRILYGLNEQGMTPDKSYKKSARIVGDVMGKYHPHGDSSIYEAMVRMAQDFSYRYPLVDGQGNFGSMDGDGAAAMRYTEARMTKITLELLRDINKDTIDFIDNYDGNEREPSVLPARFPNLLANGASGIAVGMATNIPPHNLTELINGVLSLSKNPDISIAELMEDIEGPDFPTAGLILGKSGIRRAYETGRGSIQMRSRAVIEERGGGRQRIVVTEIPFQVNKARMIEKIAELVRDKKIDGITDLRDETSLRTGVRVVIDVRKDANASVILNNLYKQTPLQTSFGVNMIALVNGRPKLINLKEALVHYLEHQKTVVRRRTQYNLRKAKDRAHILEGLRIALDHIDEIISTIRESDTDKVAMESLQQRFKLSEKQAQAILDMRLRRLTGLERDKIEAEYNELLNYISELEAILADEEVLLQLVRDELTEIRDRFGDDRRTEIQLGGFEDLEDEDLIPEEQIVITLSHNNYIKRLPVSTYRAQNRGGRGVQGMNTLEEDFVSQLVTLSTHDHVLFFTNKGRVYKLKGYEVPELSRQSKGIPVVNAIELENDEVISTMIAVKDLESEDNFLVFATKRGVVKRSALSNFSRINRNGKIAISFREDDELIAVRLTSGQEDILIGTSHASLIRFPESTLRPLGRTATGVKGITLREGDEVVGLDVAHANSVDEVLVVTENGYGKRTPVNDYRLSNRGGKGIKTATITERNGNVVCITTVTGEEDLMIVTNAGVIIRLDVADISQNGRAAQGVRLIRLGDDQFVSTVAKVKEDAEDETNEDEQSTSTVSEDGTEQQREAVVNDETPGNAIHTEVIDSEENDEDGRIEVRQDFMDRVEEDIQQSSDEE</sequence>
<protein>
    <recommendedName>
        <fullName evidence="1">DNA gyrase subunit A</fullName>
        <ecNumber evidence="1">5.6.2.2</ecNumber>
    </recommendedName>
</protein>
<gene>
    <name evidence="1" type="primary">gyrA</name>
    <name type="ordered locus">SAOUHSC_00006</name>
</gene>
<accession>Q2G2Q0</accession>
<comment type="function">
    <text evidence="1">A type II topoisomerase that negatively supercoils closed circular double-stranded (ds) DNA in an ATP-dependent manner to modulate DNA topology and maintain chromosomes in an underwound state. Negative supercoiling favors strand separation, and DNA replication, transcription, recombination and repair, all of which involve strand separation. Also able to catalyze the interconversion of other topological isomers of dsDNA rings, including catenanes and knotted rings. Type II topoisomerases break and join 2 DNA strands simultaneously in an ATP-dependent manner.</text>
</comment>
<comment type="catalytic activity">
    <reaction evidence="1">
        <text>ATP-dependent breakage, passage and rejoining of double-stranded DNA.</text>
        <dbReference type="EC" id="5.6.2.2"/>
    </reaction>
</comment>
<comment type="subunit">
    <text evidence="1">Heterotetramer, composed of two GyrA and two GyrB chains. In the heterotetramer, GyrA contains the active site tyrosine that forms a transient covalent intermediate with DNA, while GyrB binds cofactors and catalyzes ATP hydrolysis.</text>
</comment>
<comment type="subcellular location">
    <subcellularLocation>
        <location evidence="1">Cytoplasm</location>
    </subcellularLocation>
</comment>
<comment type="miscellaneous">
    <text evidence="1">Few gyrases are as efficient as E.coli at forming negative supercoils. Not all organisms have 2 type II topoisomerases; in organisms with a single type II topoisomerase this enzyme also has to decatenate newly replicated chromosomes.</text>
</comment>
<comment type="similarity">
    <text evidence="1">Belongs to the type II topoisomerase GyrA/ParC subunit family.</text>
</comment>
<keyword id="KW-0002">3D-structure</keyword>
<keyword id="KW-0046">Antibiotic resistance</keyword>
<keyword id="KW-0067">ATP-binding</keyword>
<keyword id="KW-0963">Cytoplasm</keyword>
<keyword id="KW-0238">DNA-binding</keyword>
<keyword id="KW-0413">Isomerase</keyword>
<keyword id="KW-0547">Nucleotide-binding</keyword>
<keyword id="KW-1185">Reference proteome</keyword>
<keyword id="KW-0799">Topoisomerase</keyword>
<reference key="1">
    <citation type="book" date="2006" name="Gram positive pathogens, 2nd edition">
        <title>The Staphylococcus aureus NCTC 8325 genome.</title>
        <editorList>
            <person name="Fischetti V."/>
            <person name="Novick R."/>
            <person name="Ferretti J."/>
            <person name="Portnoy D."/>
            <person name="Rood J."/>
        </editorList>
        <authorList>
            <person name="Gillaspy A.F."/>
            <person name="Worrell V."/>
            <person name="Orvis J."/>
            <person name="Roe B.A."/>
            <person name="Dyer D.W."/>
            <person name="Iandolo J.J."/>
        </authorList>
    </citation>
    <scope>NUCLEOTIDE SEQUENCE [LARGE SCALE GENOMIC DNA]</scope>
    <source>
        <strain>NCTC 8325 / PS 47</strain>
    </source>
</reference>
<reference key="2">
    <citation type="journal article" date="1995" name="Antimicrob. Agents Chemother.">
        <title>Analysis of gyrA and grlA mutations in stepwise-selected ciprofloxacin-resistant mutants of Staphylococcus aureus.</title>
        <authorList>
            <person name="Ferrero L."/>
            <person name="Cameron B."/>
            <person name="Crouzet J."/>
        </authorList>
    </citation>
    <scope>MUTAGENESIS OF SER-84 AND GLU-88</scope>
</reference>